<proteinExistence type="inferred from homology"/>
<accession>Q329G7</accession>
<comment type="function">
    <text evidence="1">Part of the ABC transporter complex RbsABC involved in ribose import. Responsible for energy coupling to the transport system.</text>
</comment>
<comment type="catalytic activity">
    <reaction evidence="1">
        <text>D-ribose(out) + ATP + H2O = D-ribose(in) + ADP + phosphate + H(+)</text>
        <dbReference type="Rhea" id="RHEA:29903"/>
        <dbReference type="ChEBI" id="CHEBI:15377"/>
        <dbReference type="ChEBI" id="CHEBI:15378"/>
        <dbReference type="ChEBI" id="CHEBI:30616"/>
        <dbReference type="ChEBI" id="CHEBI:43474"/>
        <dbReference type="ChEBI" id="CHEBI:47013"/>
        <dbReference type="ChEBI" id="CHEBI:456216"/>
        <dbReference type="EC" id="7.5.2.7"/>
    </reaction>
</comment>
<comment type="subunit">
    <text evidence="1">The complex is composed of an ATP-binding protein (RbsA), two transmembrane proteins (RbsC) and a solute-binding protein (RbsB).</text>
</comment>
<comment type="subcellular location">
    <subcellularLocation>
        <location evidence="1">Cell inner membrane</location>
        <topology evidence="1">Peripheral membrane protein</topology>
    </subcellularLocation>
</comment>
<comment type="similarity">
    <text evidence="1">Belongs to the ABC transporter superfamily. Ribose importer (TC 3.A.1.2.1) family.</text>
</comment>
<keyword id="KW-0067">ATP-binding</keyword>
<keyword id="KW-0997">Cell inner membrane</keyword>
<keyword id="KW-1003">Cell membrane</keyword>
<keyword id="KW-0472">Membrane</keyword>
<keyword id="KW-0547">Nucleotide-binding</keyword>
<keyword id="KW-1185">Reference proteome</keyword>
<keyword id="KW-0677">Repeat</keyword>
<keyword id="KW-0762">Sugar transport</keyword>
<keyword id="KW-1278">Translocase</keyword>
<keyword id="KW-0813">Transport</keyword>
<evidence type="ECO:0000255" key="1">
    <source>
        <dbReference type="HAMAP-Rule" id="MF_01716"/>
    </source>
</evidence>
<protein>
    <recommendedName>
        <fullName evidence="1">Ribose import ATP-binding protein RbsA</fullName>
        <ecNumber evidence="1">7.5.2.7</ecNumber>
    </recommendedName>
</protein>
<feature type="chain" id="PRO_0000261102" description="Ribose import ATP-binding protein RbsA">
    <location>
        <begin position="1"/>
        <end position="495"/>
    </location>
</feature>
<feature type="domain" description="ABC transporter 1" evidence="1">
    <location>
        <begin position="7"/>
        <end position="242"/>
    </location>
</feature>
<feature type="domain" description="ABC transporter 2" evidence="1">
    <location>
        <begin position="250"/>
        <end position="491"/>
    </location>
</feature>
<feature type="binding site" evidence="1">
    <location>
        <begin position="39"/>
        <end position="46"/>
    </location>
    <ligand>
        <name>ATP</name>
        <dbReference type="ChEBI" id="CHEBI:30616"/>
    </ligand>
</feature>
<sequence length="495" mass="54032">MNSTPVLEMRNIAKAFGKFYALKGVDLTVYPSENHALMGENGAGKSTLMKVLAGAYTATSGEILIDGKPFHIRTQKDALSAGITLIYQEMQLAPNLSVAENISLGSELSHGGLVQRKEMLVQAQKVIDRLGAQFNASDKVMTLTIAEQQQVEIARALHRNSRILVMDEPTAALSSRETHRLFELIMRLRDEGMAIIYISHRMAEVYELSDRVSVLRDGQYVGSLTRDNLNAGELVRMMVGRPLSDLFNKERDIPLGKARLNVHHLTDGGKVQPSSLLVRSGKIVGLAGLVGAGRSELAQLIFGVRKATGGMIEVDGEPVVIHSPREAIDLGIGFLTENRKEQGLFLEMAAAENITMATLERDARWEAQTISDDAIKLLNIRVPHAQVRAGGLSGGNQQKMLISRWVAIGPRILLLDEPTRGVDVGAKSEIYRIMNEMARKGVAILMISSELPEIVGMSDRVYVMHEGSIAGELNGKNITQENIMTLATGVNDAHS</sequence>
<name>RBSA_SHIDS</name>
<gene>
    <name evidence="1" type="primary">rbsA</name>
    <name type="ordered locus">SDY_4128</name>
</gene>
<organism>
    <name type="scientific">Shigella dysenteriae serotype 1 (strain Sd197)</name>
    <dbReference type="NCBI Taxonomy" id="300267"/>
    <lineage>
        <taxon>Bacteria</taxon>
        <taxon>Pseudomonadati</taxon>
        <taxon>Pseudomonadota</taxon>
        <taxon>Gammaproteobacteria</taxon>
        <taxon>Enterobacterales</taxon>
        <taxon>Enterobacteriaceae</taxon>
        <taxon>Shigella</taxon>
    </lineage>
</organism>
<dbReference type="EC" id="7.5.2.7" evidence="1"/>
<dbReference type="EMBL" id="CP000034">
    <property type="protein sequence ID" value="ABB64038.1"/>
    <property type="molecule type" value="Genomic_DNA"/>
</dbReference>
<dbReference type="RefSeq" id="WP_001089404.1">
    <property type="nucleotide sequence ID" value="NC_007606.1"/>
</dbReference>
<dbReference type="RefSeq" id="YP_405529.1">
    <property type="nucleotide sequence ID" value="NC_007606.1"/>
</dbReference>
<dbReference type="SMR" id="Q329G7"/>
<dbReference type="STRING" id="300267.SDY_4128"/>
<dbReference type="EnsemblBacteria" id="ABB64038">
    <property type="protein sequence ID" value="ABB64038"/>
    <property type="gene ID" value="SDY_4128"/>
</dbReference>
<dbReference type="KEGG" id="sdy:SDY_4128"/>
<dbReference type="PATRIC" id="fig|300267.13.peg.4852"/>
<dbReference type="HOGENOM" id="CLU_000604_92_3_6"/>
<dbReference type="Proteomes" id="UP000002716">
    <property type="component" value="Chromosome"/>
</dbReference>
<dbReference type="GO" id="GO:0005886">
    <property type="term" value="C:plasma membrane"/>
    <property type="evidence" value="ECO:0007669"/>
    <property type="project" value="UniProtKB-SubCell"/>
</dbReference>
<dbReference type="GO" id="GO:0015611">
    <property type="term" value="F:ABC-type D-ribose transporter activity"/>
    <property type="evidence" value="ECO:0007669"/>
    <property type="project" value="UniProtKB-EC"/>
</dbReference>
<dbReference type="GO" id="GO:0005524">
    <property type="term" value="F:ATP binding"/>
    <property type="evidence" value="ECO:0007669"/>
    <property type="project" value="UniProtKB-KW"/>
</dbReference>
<dbReference type="GO" id="GO:0016887">
    <property type="term" value="F:ATP hydrolysis activity"/>
    <property type="evidence" value="ECO:0007669"/>
    <property type="project" value="InterPro"/>
</dbReference>
<dbReference type="CDD" id="cd03216">
    <property type="entry name" value="ABC_Carb_Monos_I"/>
    <property type="match status" value="1"/>
</dbReference>
<dbReference type="CDD" id="cd03215">
    <property type="entry name" value="ABC_Carb_Monos_II"/>
    <property type="match status" value="1"/>
</dbReference>
<dbReference type="FunFam" id="3.40.50.300:FF:000127">
    <property type="entry name" value="Ribose import ATP-binding protein RbsA"/>
    <property type="match status" value="1"/>
</dbReference>
<dbReference type="Gene3D" id="3.40.50.300">
    <property type="entry name" value="P-loop containing nucleotide triphosphate hydrolases"/>
    <property type="match status" value="2"/>
</dbReference>
<dbReference type="InterPro" id="IPR003593">
    <property type="entry name" value="AAA+_ATPase"/>
</dbReference>
<dbReference type="InterPro" id="IPR050107">
    <property type="entry name" value="ABC_carbohydrate_import_ATPase"/>
</dbReference>
<dbReference type="InterPro" id="IPR003439">
    <property type="entry name" value="ABC_transporter-like_ATP-bd"/>
</dbReference>
<dbReference type="InterPro" id="IPR017871">
    <property type="entry name" value="ABC_transporter-like_CS"/>
</dbReference>
<dbReference type="InterPro" id="IPR027417">
    <property type="entry name" value="P-loop_NTPase"/>
</dbReference>
<dbReference type="PANTHER" id="PTHR43790">
    <property type="entry name" value="CARBOHYDRATE TRANSPORT ATP-BINDING PROTEIN MG119-RELATED"/>
    <property type="match status" value="1"/>
</dbReference>
<dbReference type="PANTHER" id="PTHR43790:SF3">
    <property type="entry name" value="D-ALLOSE IMPORT ATP-BINDING PROTEIN ALSA-RELATED"/>
    <property type="match status" value="1"/>
</dbReference>
<dbReference type="Pfam" id="PF00005">
    <property type="entry name" value="ABC_tran"/>
    <property type="match status" value="2"/>
</dbReference>
<dbReference type="SMART" id="SM00382">
    <property type="entry name" value="AAA"/>
    <property type="match status" value="2"/>
</dbReference>
<dbReference type="SUPFAM" id="SSF52540">
    <property type="entry name" value="P-loop containing nucleoside triphosphate hydrolases"/>
    <property type="match status" value="2"/>
</dbReference>
<dbReference type="PROSITE" id="PS00211">
    <property type="entry name" value="ABC_TRANSPORTER_1"/>
    <property type="match status" value="1"/>
</dbReference>
<dbReference type="PROSITE" id="PS50893">
    <property type="entry name" value="ABC_TRANSPORTER_2"/>
    <property type="match status" value="2"/>
</dbReference>
<dbReference type="PROSITE" id="PS51254">
    <property type="entry name" value="RBSA"/>
    <property type="match status" value="1"/>
</dbReference>
<reference key="1">
    <citation type="journal article" date="2005" name="Nucleic Acids Res.">
        <title>Genome dynamics and diversity of Shigella species, the etiologic agents of bacillary dysentery.</title>
        <authorList>
            <person name="Yang F."/>
            <person name="Yang J."/>
            <person name="Zhang X."/>
            <person name="Chen L."/>
            <person name="Jiang Y."/>
            <person name="Yan Y."/>
            <person name="Tang X."/>
            <person name="Wang J."/>
            <person name="Xiong Z."/>
            <person name="Dong J."/>
            <person name="Xue Y."/>
            <person name="Zhu Y."/>
            <person name="Xu X."/>
            <person name="Sun L."/>
            <person name="Chen S."/>
            <person name="Nie H."/>
            <person name="Peng J."/>
            <person name="Xu J."/>
            <person name="Wang Y."/>
            <person name="Yuan Z."/>
            <person name="Wen Y."/>
            <person name="Yao Z."/>
            <person name="Shen Y."/>
            <person name="Qiang B."/>
            <person name="Hou Y."/>
            <person name="Yu J."/>
            <person name="Jin Q."/>
        </authorList>
    </citation>
    <scope>NUCLEOTIDE SEQUENCE [LARGE SCALE GENOMIC DNA]</scope>
    <source>
        <strain>Sd197</strain>
    </source>
</reference>